<gene>
    <name evidence="1" type="primary">rpsB</name>
    <name type="ordered locus">IL0845</name>
</gene>
<keyword id="KW-1185">Reference proteome</keyword>
<keyword id="KW-0687">Ribonucleoprotein</keyword>
<keyword id="KW-0689">Ribosomal protein</keyword>
<name>RS2_IDILO</name>
<protein>
    <recommendedName>
        <fullName evidence="1">Small ribosomal subunit protein uS2</fullName>
    </recommendedName>
    <alternativeName>
        <fullName evidence="2">30S ribosomal protein S2</fullName>
    </alternativeName>
</protein>
<sequence>MANVSMRDMLKAGVHFGHQTRFWNPKMKPYIFGARNKIHIINLEKTVPMFNDALSYMQHVASNKGKILFVGTKRAAAEAVKEAAINCGQYYVNHRWLGGMLTNWKTVRQSIKRLKDLETMSQDGTFEKLTKKEALVNTREMEKLEKGLGGIKNMGGLPDVLFVIDADHEHISIKEANNLGIPVVSVVDTNSNPDGVDYIVPGNDDAIRAVQLYLNTAAEAVKEARTAQVEAKDSDDFVEATE</sequence>
<proteinExistence type="inferred from homology"/>
<comment type="similarity">
    <text evidence="1">Belongs to the universal ribosomal protein uS2 family.</text>
</comment>
<evidence type="ECO:0000255" key="1">
    <source>
        <dbReference type="HAMAP-Rule" id="MF_00291"/>
    </source>
</evidence>
<evidence type="ECO:0000305" key="2"/>
<dbReference type="EMBL" id="AE017340">
    <property type="protein sequence ID" value="AAV81685.1"/>
    <property type="molecule type" value="Genomic_DNA"/>
</dbReference>
<dbReference type="RefSeq" id="WP_011234096.1">
    <property type="nucleotide sequence ID" value="NC_006512.1"/>
</dbReference>
<dbReference type="SMR" id="Q5QXS0"/>
<dbReference type="STRING" id="283942.IL0845"/>
<dbReference type="GeneID" id="41336001"/>
<dbReference type="KEGG" id="ilo:IL0845"/>
<dbReference type="eggNOG" id="COG0052">
    <property type="taxonomic scope" value="Bacteria"/>
</dbReference>
<dbReference type="HOGENOM" id="CLU_040318_1_2_6"/>
<dbReference type="OrthoDB" id="9808036at2"/>
<dbReference type="Proteomes" id="UP000001171">
    <property type="component" value="Chromosome"/>
</dbReference>
<dbReference type="GO" id="GO:0022627">
    <property type="term" value="C:cytosolic small ribosomal subunit"/>
    <property type="evidence" value="ECO:0007669"/>
    <property type="project" value="TreeGrafter"/>
</dbReference>
<dbReference type="GO" id="GO:0003735">
    <property type="term" value="F:structural constituent of ribosome"/>
    <property type="evidence" value="ECO:0007669"/>
    <property type="project" value="InterPro"/>
</dbReference>
<dbReference type="GO" id="GO:0006412">
    <property type="term" value="P:translation"/>
    <property type="evidence" value="ECO:0007669"/>
    <property type="project" value="UniProtKB-UniRule"/>
</dbReference>
<dbReference type="CDD" id="cd01425">
    <property type="entry name" value="RPS2"/>
    <property type="match status" value="1"/>
</dbReference>
<dbReference type="FunFam" id="1.10.287.610:FF:000001">
    <property type="entry name" value="30S ribosomal protein S2"/>
    <property type="match status" value="1"/>
</dbReference>
<dbReference type="Gene3D" id="3.40.50.10490">
    <property type="entry name" value="Glucose-6-phosphate isomerase like protein, domain 1"/>
    <property type="match status" value="1"/>
</dbReference>
<dbReference type="Gene3D" id="1.10.287.610">
    <property type="entry name" value="Helix hairpin bin"/>
    <property type="match status" value="1"/>
</dbReference>
<dbReference type="HAMAP" id="MF_00291_B">
    <property type="entry name" value="Ribosomal_uS2_B"/>
    <property type="match status" value="1"/>
</dbReference>
<dbReference type="InterPro" id="IPR001865">
    <property type="entry name" value="Ribosomal_uS2"/>
</dbReference>
<dbReference type="InterPro" id="IPR005706">
    <property type="entry name" value="Ribosomal_uS2_bac/mit/plastid"/>
</dbReference>
<dbReference type="InterPro" id="IPR018130">
    <property type="entry name" value="Ribosomal_uS2_CS"/>
</dbReference>
<dbReference type="InterPro" id="IPR023591">
    <property type="entry name" value="Ribosomal_uS2_flav_dom_sf"/>
</dbReference>
<dbReference type="NCBIfam" id="TIGR01011">
    <property type="entry name" value="rpsB_bact"/>
    <property type="match status" value="1"/>
</dbReference>
<dbReference type="PANTHER" id="PTHR12534">
    <property type="entry name" value="30S RIBOSOMAL PROTEIN S2 PROKARYOTIC AND ORGANELLAR"/>
    <property type="match status" value="1"/>
</dbReference>
<dbReference type="PANTHER" id="PTHR12534:SF0">
    <property type="entry name" value="SMALL RIBOSOMAL SUBUNIT PROTEIN US2M"/>
    <property type="match status" value="1"/>
</dbReference>
<dbReference type="Pfam" id="PF00318">
    <property type="entry name" value="Ribosomal_S2"/>
    <property type="match status" value="1"/>
</dbReference>
<dbReference type="PRINTS" id="PR00395">
    <property type="entry name" value="RIBOSOMALS2"/>
</dbReference>
<dbReference type="SUPFAM" id="SSF52313">
    <property type="entry name" value="Ribosomal protein S2"/>
    <property type="match status" value="1"/>
</dbReference>
<dbReference type="PROSITE" id="PS00962">
    <property type="entry name" value="RIBOSOMAL_S2_1"/>
    <property type="match status" value="1"/>
</dbReference>
<dbReference type="PROSITE" id="PS00963">
    <property type="entry name" value="RIBOSOMAL_S2_2"/>
    <property type="match status" value="1"/>
</dbReference>
<organism>
    <name type="scientific">Idiomarina loihiensis (strain ATCC BAA-735 / DSM 15497 / L2-TR)</name>
    <dbReference type="NCBI Taxonomy" id="283942"/>
    <lineage>
        <taxon>Bacteria</taxon>
        <taxon>Pseudomonadati</taxon>
        <taxon>Pseudomonadota</taxon>
        <taxon>Gammaproteobacteria</taxon>
        <taxon>Alteromonadales</taxon>
        <taxon>Idiomarinaceae</taxon>
        <taxon>Idiomarina</taxon>
    </lineage>
</organism>
<feature type="chain" id="PRO_0000134180" description="Small ribosomal subunit protein uS2">
    <location>
        <begin position="1"/>
        <end position="242"/>
    </location>
</feature>
<reference key="1">
    <citation type="journal article" date="2004" name="Proc. Natl. Acad. Sci. U.S.A.">
        <title>Genome sequence of the deep-sea gamma-proteobacterium Idiomarina loihiensis reveals amino acid fermentation as a source of carbon and energy.</title>
        <authorList>
            <person name="Hou S."/>
            <person name="Saw J.H."/>
            <person name="Lee K.S."/>
            <person name="Freitas T.A."/>
            <person name="Belisle C."/>
            <person name="Kawarabayasi Y."/>
            <person name="Donachie S.P."/>
            <person name="Pikina A."/>
            <person name="Galperin M.Y."/>
            <person name="Koonin E.V."/>
            <person name="Makarova K.S."/>
            <person name="Omelchenko M.V."/>
            <person name="Sorokin A."/>
            <person name="Wolf Y.I."/>
            <person name="Li Q.X."/>
            <person name="Keum Y.S."/>
            <person name="Campbell S."/>
            <person name="Denery J."/>
            <person name="Aizawa S."/>
            <person name="Shibata S."/>
            <person name="Malahoff A."/>
            <person name="Alam M."/>
        </authorList>
    </citation>
    <scope>NUCLEOTIDE SEQUENCE [LARGE SCALE GENOMIC DNA]</scope>
    <source>
        <strain>ATCC BAA-735 / DSM 15497 / L2-TR</strain>
    </source>
</reference>
<accession>Q5QXS0</accession>